<protein>
    <recommendedName>
        <fullName evidence="1">Nucleotide-binding protein Acry_0446</fullName>
    </recommendedName>
</protein>
<comment type="function">
    <text evidence="1">Displays ATPase and GTPase activities.</text>
</comment>
<comment type="similarity">
    <text evidence="1">Belongs to the RapZ-like family.</text>
</comment>
<feature type="chain" id="PRO_0000383203" description="Nucleotide-binding protein Acry_0446">
    <location>
        <begin position="1"/>
        <end position="303"/>
    </location>
</feature>
<feature type="binding site" evidence="1">
    <location>
        <begin position="10"/>
        <end position="17"/>
    </location>
    <ligand>
        <name>ATP</name>
        <dbReference type="ChEBI" id="CHEBI:30616"/>
    </ligand>
</feature>
<feature type="binding site" evidence="1">
    <location>
        <begin position="54"/>
        <end position="57"/>
    </location>
    <ligand>
        <name>GTP</name>
        <dbReference type="ChEBI" id="CHEBI:37565"/>
    </ligand>
</feature>
<reference key="1">
    <citation type="submission" date="2007-05" db="EMBL/GenBank/DDBJ databases">
        <title>Complete sequence of chromosome of Acidiphilium cryptum JF-5.</title>
        <authorList>
            <consortium name="US DOE Joint Genome Institute"/>
            <person name="Copeland A."/>
            <person name="Lucas S."/>
            <person name="Lapidus A."/>
            <person name="Barry K."/>
            <person name="Detter J.C."/>
            <person name="Glavina del Rio T."/>
            <person name="Hammon N."/>
            <person name="Israni S."/>
            <person name="Dalin E."/>
            <person name="Tice H."/>
            <person name="Pitluck S."/>
            <person name="Sims D."/>
            <person name="Brettin T."/>
            <person name="Bruce D."/>
            <person name="Han C."/>
            <person name="Schmutz J."/>
            <person name="Larimer F."/>
            <person name="Land M."/>
            <person name="Hauser L."/>
            <person name="Kyrpides N."/>
            <person name="Kim E."/>
            <person name="Magnuson T."/>
            <person name="Richardson P."/>
        </authorList>
    </citation>
    <scope>NUCLEOTIDE SEQUENCE [LARGE SCALE GENOMIC DNA]</scope>
    <source>
        <strain>JF-5</strain>
    </source>
</reference>
<dbReference type="EMBL" id="CP000697">
    <property type="protein sequence ID" value="ABQ29671.1"/>
    <property type="molecule type" value="Genomic_DNA"/>
</dbReference>
<dbReference type="SMR" id="A5FVN9"/>
<dbReference type="STRING" id="349163.Acry_0446"/>
<dbReference type="KEGG" id="acr:Acry_0446"/>
<dbReference type="eggNOG" id="COG1660">
    <property type="taxonomic scope" value="Bacteria"/>
</dbReference>
<dbReference type="HOGENOM" id="CLU_059558_0_0_5"/>
<dbReference type="Proteomes" id="UP000000245">
    <property type="component" value="Chromosome"/>
</dbReference>
<dbReference type="GO" id="GO:0005524">
    <property type="term" value="F:ATP binding"/>
    <property type="evidence" value="ECO:0007669"/>
    <property type="project" value="UniProtKB-UniRule"/>
</dbReference>
<dbReference type="GO" id="GO:0005525">
    <property type="term" value="F:GTP binding"/>
    <property type="evidence" value="ECO:0007669"/>
    <property type="project" value="UniProtKB-UniRule"/>
</dbReference>
<dbReference type="HAMAP" id="MF_00636">
    <property type="entry name" value="RapZ_like"/>
    <property type="match status" value="1"/>
</dbReference>
<dbReference type="InterPro" id="IPR027417">
    <property type="entry name" value="P-loop_NTPase"/>
</dbReference>
<dbReference type="InterPro" id="IPR005337">
    <property type="entry name" value="RapZ-like"/>
</dbReference>
<dbReference type="InterPro" id="IPR053930">
    <property type="entry name" value="RapZ-like_N"/>
</dbReference>
<dbReference type="InterPro" id="IPR053931">
    <property type="entry name" value="RapZ_C"/>
</dbReference>
<dbReference type="NCBIfam" id="NF003828">
    <property type="entry name" value="PRK05416.1"/>
    <property type="match status" value="1"/>
</dbReference>
<dbReference type="PANTHER" id="PTHR30448">
    <property type="entry name" value="RNASE ADAPTER PROTEIN RAPZ"/>
    <property type="match status" value="1"/>
</dbReference>
<dbReference type="PANTHER" id="PTHR30448:SF0">
    <property type="entry name" value="RNASE ADAPTER PROTEIN RAPZ"/>
    <property type="match status" value="1"/>
</dbReference>
<dbReference type="Pfam" id="PF22740">
    <property type="entry name" value="PapZ_C"/>
    <property type="match status" value="1"/>
</dbReference>
<dbReference type="Pfam" id="PF03668">
    <property type="entry name" value="RapZ-like_N"/>
    <property type="match status" value="1"/>
</dbReference>
<dbReference type="PIRSF" id="PIRSF005052">
    <property type="entry name" value="P-loopkin"/>
    <property type="match status" value="1"/>
</dbReference>
<dbReference type="SUPFAM" id="SSF52540">
    <property type="entry name" value="P-loop containing nucleoside triphosphate hydrolases"/>
    <property type="match status" value="1"/>
</dbReference>
<gene>
    <name type="ordered locus">Acry_0446</name>
</gene>
<name>Y446_ACICJ</name>
<organism>
    <name type="scientific">Acidiphilium cryptum (strain JF-5)</name>
    <dbReference type="NCBI Taxonomy" id="349163"/>
    <lineage>
        <taxon>Bacteria</taxon>
        <taxon>Pseudomonadati</taxon>
        <taxon>Pseudomonadota</taxon>
        <taxon>Alphaproteobacteria</taxon>
        <taxon>Acetobacterales</taxon>
        <taxon>Acidocellaceae</taxon>
        <taxon>Acidiphilium</taxon>
    </lineage>
</organism>
<sequence>MSARMVIVTGLSGAGRNSVLRALEDIGYEAVDNPPLRIVETLVRGDKPLAVGVDARTRDFSAEDVLSTIDRLQTRGCVRPELIFITASPEALQRRFSETRRRHPLALAGTVSEGIETEQALTRTLRNAADWVIDTSELSLAGLRQIIDQRFGLGGPGMSITLVSFGYPSGLPQEADLVLDTRFLRNPHYIPDLRDRTGLDPQVRDYIRQDPDFPEFFERVSGLTDYLLPRFVREGKKYVMIAFGCTGGKHRSVSLVEMLGSRLRNADWNVLIEHRSLGSRSVGGAWKAMPGAHQGAPMPGVQK</sequence>
<accession>A5FVN9</accession>
<keyword id="KW-0067">ATP-binding</keyword>
<keyword id="KW-0342">GTP-binding</keyword>
<keyword id="KW-0547">Nucleotide-binding</keyword>
<keyword id="KW-1185">Reference proteome</keyword>
<evidence type="ECO:0000255" key="1">
    <source>
        <dbReference type="HAMAP-Rule" id="MF_00636"/>
    </source>
</evidence>
<proteinExistence type="inferred from homology"/>